<protein>
    <recommendedName>
        <fullName evidence="1">Thymidylate kinase</fullName>
        <ecNumber evidence="1">2.7.4.9</ecNumber>
    </recommendedName>
    <alternativeName>
        <fullName evidence="1">dTMP kinase</fullName>
    </alternativeName>
</protein>
<feature type="chain" id="PRO_1000190765" description="Thymidylate kinase">
    <location>
        <begin position="1"/>
        <end position="213"/>
    </location>
</feature>
<feature type="binding site" evidence="1">
    <location>
        <begin position="10"/>
        <end position="17"/>
    </location>
    <ligand>
        <name>ATP</name>
        <dbReference type="ChEBI" id="CHEBI:30616"/>
    </ligand>
</feature>
<accession>B7LX32</accession>
<reference key="1">
    <citation type="journal article" date="2009" name="PLoS Genet.">
        <title>Organised genome dynamics in the Escherichia coli species results in highly diverse adaptive paths.</title>
        <authorList>
            <person name="Touchon M."/>
            <person name="Hoede C."/>
            <person name="Tenaillon O."/>
            <person name="Barbe V."/>
            <person name="Baeriswyl S."/>
            <person name="Bidet P."/>
            <person name="Bingen E."/>
            <person name="Bonacorsi S."/>
            <person name="Bouchier C."/>
            <person name="Bouvet O."/>
            <person name="Calteau A."/>
            <person name="Chiapello H."/>
            <person name="Clermont O."/>
            <person name="Cruveiller S."/>
            <person name="Danchin A."/>
            <person name="Diard M."/>
            <person name="Dossat C."/>
            <person name="Karoui M.E."/>
            <person name="Frapy E."/>
            <person name="Garry L."/>
            <person name="Ghigo J.M."/>
            <person name="Gilles A.M."/>
            <person name="Johnson J."/>
            <person name="Le Bouguenec C."/>
            <person name="Lescat M."/>
            <person name="Mangenot S."/>
            <person name="Martinez-Jehanne V."/>
            <person name="Matic I."/>
            <person name="Nassif X."/>
            <person name="Oztas S."/>
            <person name="Petit M.A."/>
            <person name="Pichon C."/>
            <person name="Rouy Z."/>
            <person name="Ruf C.S."/>
            <person name="Schneider D."/>
            <person name="Tourret J."/>
            <person name="Vacherie B."/>
            <person name="Vallenet D."/>
            <person name="Medigue C."/>
            <person name="Rocha E.P.C."/>
            <person name="Denamur E."/>
        </authorList>
    </citation>
    <scope>NUCLEOTIDE SEQUENCE [LARGE SCALE GENOMIC DNA]</scope>
    <source>
        <strain>IAI1</strain>
    </source>
</reference>
<evidence type="ECO:0000255" key="1">
    <source>
        <dbReference type="HAMAP-Rule" id="MF_00165"/>
    </source>
</evidence>
<name>KTHY_ECO8A</name>
<keyword id="KW-0067">ATP-binding</keyword>
<keyword id="KW-0418">Kinase</keyword>
<keyword id="KW-0545">Nucleotide biosynthesis</keyword>
<keyword id="KW-0547">Nucleotide-binding</keyword>
<keyword id="KW-0808">Transferase</keyword>
<gene>
    <name evidence="1" type="primary">tmk</name>
    <name type="ordered locus">ECIAI1_1133</name>
</gene>
<organism>
    <name type="scientific">Escherichia coli O8 (strain IAI1)</name>
    <dbReference type="NCBI Taxonomy" id="585034"/>
    <lineage>
        <taxon>Bacteria</taxon>
        <taxon>Pseudomonadati</taxon>
        <taxon>Pseudomonadota</taxon>
        <taxon>Gammaproteobacteria</taxon>
        <taxon>Enterobacterales</taxon>
        <taxon>Enterobacteriaceae</taxon>
        <taxon>Escherichia</taxon>
    </lineage>
</organism>
<sequence length="213" mass="23783">MRSKYIVIEGLEGAGKTTARNVVVETLEQLGIRDMVFTREPGGTQLAEKLRSLVLDIKSVGDEVITDKAEVLMFYAARVQLVETVIKPALANGTWVIGDRHDLSTQAYQGGGRGIDQHMLATLRDAVLGDFRPDLTLYLDVTPEVGLKRARARGELDRIEQESFDFFNRTRARYLELAAQDKSIHTIDATQPLEAVMDAIRTTVTHWVKELDA</sequence>
<dbReference type="EC" id="2.7.4.9" evidence="1"/>
<dbReference type="EMBL" id="CU928160">
    <property type="protein sequence ID" value="CAQ97997.1"/>
    <property type="molecule type" value="Genomic_DNA"/>
</dbReference>
<dbReference type="RefSeq" id="WP_001257000.1">
    <property type="nucleotide sequence ID" value="NC_011741.1"/>
</dbReference>
<dbReference type="SMR" id="B7LX32"/>
<dbReference type="GeneID" id="93776310"/>
<dbReference type="KEGG" id="ecr:ECIAI1_1133"/>
<dbReference type="HOGENOM" id="CLU_049131_0_1_6"/>
<dbReference type="GO" id="GO:0005829">
    <property type="term" value="C:cytosol"/>
    <property type="evidence" value="ECO:0007669"/>
    <property type="project" value="TreeGrafter"/>
</dbReference>
<dbReference type="GO" id="GO:0005524">
    <property type="term" value="F:ATP binding"/>
    <property type="evidence" value="ECO:0007669"/>
    <property type="project" value="UniProtKB-UniRule"/>
</dbReference>
<dbReference type="GO" id="GO:0004798">
    <property type="term" value="F:dTMP kinase activity"/>
    <property type="evidence" value="ECO:0007669"/>
    <property type="project" value="UniProtKB-UniRule"/>
</dbReference>
<dbReference type="GO" id="GO:0006233">
    <property type="term" value="P:dTDP biosynthetic process"/>
    <property type="evidence" value="ECO:0007669"/>
    <property type="project" value="InterPro"/>
</dbReference>
<dbReference type="GO" id="GO:0006235">
    <property type="term" value="P:dTTP biosynthetic process"/>
    <property type="evidence" value="ECO:0007669"/>
    <property type="project" value="UniProtKB-UniRule"/>
</dbReference>
<dbReference type="GO" id="GO:0006227">
    <property type="term" value="P:dUDP biosynthetic process"/>
    <property type="evidence" value="ECO:0007669"/>
    <property type="project" value="TreeGrafter"/>
</dbReference>
<dbReference type="CDD" id="cd01672">
    <property type="entry name" value="TMPK"/>
    <property type="match status" value="1"/>
</dbReference>
<dbReference type="FunFam" id="3.40.50.300:FF:000321">
    <property type="entry name" value="Thymidylate kinase"/>
    <property type="match status" value="1"/>
</dbReference>
<dbReference type="Gene3D" id="3.40.50.300">
    <property type="entry name" value="P-loop containing nucleotide triphosphate hydrolases"/>
    <property type="match status" value="1"/>
</dbReference>
<dbReference type="HAMAP" id="MF_00165">
    <property type="entry name" value="Thymidylate_kinase"/>
    <property type="match status" value="1"/>
</dbReference>
<dbReference type="InterPro" id="IPR027417">
    <property type="entry name" value="P-loop_NTPase"/>
</dbReference>
<dbReference type="InterPro" id="IPR039430">
    <property type="entry name" value="Thymidylate_kin-like_dom"/>
</dbReference>
<dbReference type="InterPro" id="IPR018095">
    <property type="entry name" value="Thymidylate_kin_CS"/>
</dbReference>
<dbReference type="InterPro" id="IPR018094">
    <property type="entry name" value="Thymidylate_kinase"/>
</dbReference>
<dbReference type="NCBIfam" id="TIGR00041">
    <property type="entry name" value="DTMP_kinase"/>
    <property type="match status" value="1"/>
</dbReference>
<dbReference type="PANTHER" id="PTHR10344">
    <property type="entry name" value="THYMIDYLATE KINASE"/>
    <property type="match status" value="1"/>
</dbReference>
<dbReference type="PANTHER" id="PTHR10344:SF4">
    <property type="entry name" value="UMP-CMP KINASE 2, MITOCHONDRIAL"/>
    <property type="match status" value="1"/>
</dbReference>
<dbReference type="Pfam" id="PF02223">
    <property type="entry name" value="Thymidylate_kin"/>
    <property type="match status" value="1"/>
</dbReference>
<dbReference type="SUPFAM" id="SSF52540">
    <property type="entry name" value="P-loop containing nucleoside triphosphate hydrolases"/>
    <property type="match status" value="1"/>
</dbReference>
<dbReference type="PROSITE" id="PS01331">
    <property type="entry name" value="THYMIDYLATE_KINASE"/>
    <property type="match status" value="1"/>
</dbReference>
<proteinExistence type="inferred from homology"/>
<comment type="function">
    <text evidence="1">Phosphorylation of dTMP to form dTDP in both de novo and salvage pathways of dTTP synthesis.</text>
</comment>
<comment type="catalytic activity">
    <reaction evidence="1">
        <text>dTMP + ATP = dTDP + ADP</text>
        <dbReference type="Rhea" id="RHEA:13517"/>
        <dbReference type="ChEBI" id="CHEBI:30616"/>
        <dbReference type="ChEBI" id="CHEBI:58369"/>
        <dbReference type="ChEBI" id="CHEBI:63528"/>
        <dbReference type="ChEBI" id="CHEBI:456216"/>
        <dbReference type="EC" id="2.7.4.9"/>
    </reaction>
</comment>
<comment type="similarity">
    <text evidence="1">Belongs to the thymidylate kinase family.</text>
</comment>